<reference key="1">
    <citation type="submission" date="2007-05" db="EMBL/GenBank/DDBJ databases">
        <title>Complete sequence of chromosome of Staphylococcus aureus subsp. aureus JH9.</title>
        <authorList>
            <consortium name="US DOE Joint Genome Institute"/>
            <person name="Copeland A."/>
            <person name="Lucas S."/>
            <person name="Lapidus A."/>
            <person name="Barry K."/>
            <person name="Detter J.C."/>
            <person name="Glavina del Rio T."/>
            <person name="Hammon N."/>
            <person name="Israni S."/>
            <person name="Pitluck S."/>
            <person name="Chain P."/>
            <person name="Malfatti S."/>
            <person name="Shin M."/>
            <person name="Vergez L."/>
            <person name="Schmutz J."/>
            <person name="Larimer F."/>
            <person name="Land M."/>
            <person name="Hauser L."/>
            <person name="Kyrpides N."/>
            <person name="Kim E."/>
            <person name="Tomasz A."/>
            <person name="Richardson P."/>
        </authorList>
    </citation>
    <scope>NUCLEOTIDE SEQUENCE [LARGE SCALE GENOMIC DNA]</scope>
    <source>
        <strain>JH9</strain>
    </source>
</reference>
<name>ISDA_STAA9</name>
<sequence length="350" mass="38746">MTKHYLNSKYQSEQRSSAMKKITMGTASIILGSLVYIGADSQQVNAATEATNATNNQSTQVSQATSQPINFQVQKDGSSEKSHMDDYMQHPGKVIKQNNKYYFQTVLNNASFWKEYKFYNANNQELATTVVNDNKKADTRTINVAVEPGYKSLTTKVHIVVPQINYNHRYTTHLEFEKAIPTLADAAKPNNVKPVQPKPAQPKTPTEQTKPVQPKVEKVKPTVTTTSKVEDNHSTKVVSTDTTKDQTKTQTAHTVKTAQTAQEQNKVQTPVKDVATAKSESNNQAVSDNKSQQTNKVTKHNETPKQASKAKELPKTGLTSVDNFISTVAFATLALLGSLSLLLFKRKESK</sequence>
<keyword id="KW-0134">Cell wall</keyword>
<keyword id="KW-0349">Heme</keyword>
<keyword id="KW-0408">Iron</keyword>
<keyword id="KW-0479">Metal-binding</keyword>
<keyword id="KW-0572">Peptidoglycan-anchor</keyword>
<keyword id="KW-0964">Secreted</keyword>
<keyword id="KW-0732">Signal</keyword>
<evidence type="ECO:0000250" key="1"/>
<evidence type="ECO:0000250" key="2">
    <source>
        <dbReference type="UniProtKB" id="A6QG31"/>
    </source>
</evidence>
<evidence type="ECO:0000250" key="3">
    <source>
        <dbReference type="UniProtKB" id="Q7A152"/>
    </source>
</evidence>
<evidence type="ECO:0000250" key="4">
    <source>
        <dbReference type="UniProtKB" id="Q7A655"/>
    </source>
</evidence>
<evidence type="ECO:0000255" key="5">
    <source>
        <dbReference type="PROSITE-ProRule" id="PRU00337"/>
    </source>
</evidence>
<evidence type="ECO:0000255" key="6">
    <source>
        <dbReference type="PROSITE-ProRule" id="PRU00477"/>
    </source>
</evidence>
<evidence type="ECO:0000256" key="7">
    <source>
        <dbReference type="SAM" id="MobiDB-lite"/>
    </source>
</evidence>
<evidence type="ECO:0000305" key="8"/>
<accession>A5IS16</accession>
<dbReference type="EMBL" id="CP000703">
    <property type="protein sequence ID" value="ABQ48989.1"/>
    <property type="molecule type" value="Genomic_DNA"/>
</dbReference>
<dbReference type="RefSeq" id="WP_000160859.1">
    <property type="nucleotide sequence ID" value="NC_009487.1"/>
</dbReference>
<dbReference type="SMR" id="A5IS16"/>
<dbReference type="KEGG" id="saj:SaurJH9_1189"/>
<dbReference type="HOGENOM" id="CLU_068057_0_0_9"/>
<dbReference type="PRO" id="PR:A5IS16"/>
<dbReference type="GO" id="GO:0005576">
    <property type="term" value="C:extracellular region"/>
    <property type="evidence" value="ECO:0007669"/>
    <property type="project" value="UniProtKB-KW"/>
</dbReference>
<dbReference type="GO" id="GO:0046872">
    <property type="term" value="F:metal ion binding"/>
    <property type="evidence" value="ECO:0007669"/>
    <property type="project" value="UniProtKB-KW"/>
</dbReference>
<dbReference type="CDD" id="cd06920">
    <property type="entry name" value="NEAT"/>
    <property type="match status" value="1"/>
</dbReference>
<dbReference type="Gene3D" id="2.60.40.1850">
    <property type="match status" value="1"/>
</dbReference>
<dbReference type="InterPro" id="IPR050436">
    <property type="entry name" value="IsdA"/>
</dbReference>
<dbReference type="InterPro" id="IPR019931">
    <property type="entry name" value="LPXTG_anchor"/>
</dbReference>
<dbReference type="InterPro" id="IPR006635">
    <property type="entry name" value="NEAT_dom"/>
</dbReference>
<dbReference type="InterPro" id="IPR037250">
    <property type="entry name" value="NEAT_dom_sf"/>
</dbReference>
<dbReference type="NCBIfam" id="TIGR01167">
    <property type="entry name" value="LPXTG_anchor"/>
    <property type="match status" value="1"/>
</dbReference>
<dbReference type="PANTHER" id="PTHR37824">
    <property type="entry name" value="IRON-REGULATED SURFACE DETERMINANT PROTEIN C"/>
    <property type="match status" value="1"/>
</dbReference>
<dbReference type="PANTHER" id="PTHR37824:SF1">
    <property type="entry name" value="IRON-REGULATED SURFACE DETERMINANT PROTEIN C"/>
    <property type="match status" value="1"/>
</dbReference>
<dbReference type="Pfam" id="PF00746">
    <property type="entry name" value="Gram_pos_anchor"/>
    <property type="match status" value="1"/>
</dbReference>
<dbReference type="Pfam" id="PF05031">
    <property type="entry name" value="NEAT"/>
    <property type="match status" value="1"/>
</dbReference>
<dbReference type="SMART" id="SM00725">
    <property type="entry name" value="NEAT"/>
    <property type="match status" value="1"/>
</dbReference>
<dbReference type="SUPFAM" id="SSF158911">
    <property type="entry name" value="NEAT domain-like"/>
    <property type="match status" value="1"/>
</dbReference>
<dbReference type="PROSITE" id="PS50847">
    <property type="entry name" value="GRAM_POS_ANCHORING"/>
    <property type="match status" value="1"/>
</dbReference>
<dbReference type="PROSITE" id="PS50978">
    <property type="entry name" value="NEAT"/>
    <property type="match status" value="1"/>
</dbReference>
<feature type="signal peptide" evidence="1">
    <location>
        <begin position="1"/>
        <end position="46"/>
    </location>
</feature>
<feature type="chain" id="PRO_5000247262" description="Iron-regulated surface determinant protein A">
    <location>
        <begin position="47"/>
        <end position="316"/>
    </location>
</feature>
<feature type="propeptide" id="PRO_0000333239" description="Removed by sortase A" evidence="6">
    <location>
        <begin position="317"/>
        <end position="350"/>
    </location>
</feature>
<feature type="domain" description="NEAT" evidence="5">
    <location>
        <begin position="62"/>
        <end position="184"/>
    </location>
</feature>
<feature type="region of interest" description="Disordered" evidence="7">
    <location>
        <begin position="188"/>
        <end position="314"/>
    </location>
</feature>
<feature type="short sequence motif" description="LPXTG sorting signal" evidence="6">
    <location>
        <begin position="313"/>
        <end position="317"/>
    </location>
</feature>
<feature type="compositionally biased region" description="Low complexity" evidence="7">
    <location>
        <begin position="203"/>
        <end position="214"/>
    </location>
</feature>
<feature type="compositionally biased region" description="Polar residues" evidence="7">
    <location>
        <begin position="252"/>
        <end position="268"/>
    </location>
</feature>
<feature type="compositionally biased region" description="Polar residues" evidence="7">
    <location>
        <begin position="278"/>
        <end position="296"/>
    </location>
</feature>
<feature type="compositionally biased region" description="Basic and acidic residues" evidence="7">
    <location>
        <begin position="299"/>
        <end position="314"/>
    </location>
</feature>
<feature type="binding site" evidence="1">
    <location>
        <position position="75"/>
    </location>
    <ligand>
        <name>heme</name>
        <dbReference type="ChEBI" id="CHEBI:30413"/>
    </ligand>
</feature>
<feature type="binding site" evidence="1">
    <location>
        <position position="82"/>
    </location>
    <ligand>
        <name>heme</name>
        <dbReference type="ChEBI" id="CHEBI:30413"/>
    </ligand>
</feature>
<feature type="binding site" description="axial binding residue" evidence="4">
    <location>
        <position position="166"/>
    </location>
    <ligand>
        <name>heme</name>
        <dbReference type="ChEBI" id="CHEBI:30413"/>
    </ligand>
    <ligandPart>
        <name>Fe</name>
        <dbReference type="ChEBI" id="CHEBI:18248"/>
    </ligandPart>
</feature>
<feature type="modified residue" description="Pentaglycyl murein peptidoglycan amidated threonine" evidence="6">
    <location>
        <position position="316"/>
    </location>
</feature>
<comment type="function">
    <text evidence="2 3">Cell wall-anchored surface receptor that participates in the extraction of heme from oxidized methemoglobin/metHb to enable growth on hemoglobin as a sole iron source (By similarity). Receives heme from IsdB and transfers it to IsdC (By similarity). Also plays a role in the inhibition of host immune response. Protects S.aureus against the bactericidal protease activity of apolactoferrin. Decreases bacterial cellular hydrophobicity, which renders S.aureus resistant to bactericidal human skin fatty acids as well as to beta-defensins and cathelicidin. Also binds fibronectin and chains B-beta and gamma of fibrinogen, promoting clumping of S.aureus with fibrinogen. Involved in adherence of S.aureus to human desquamated nasal epithelial cells and is required for nasal colonization (By similarity).</text>
</comment>
<comment type="subunit">
    <text evidence="2 3">Monomer. Interacts with IsdC (By similarity). Interacts with IsdB (By similarity).</text>
</comment>
<comment type="subcellular location">
    <subcellularLocation>
        <location evidence="2">Secreted</location>
        <location evidence="2">Cell wall</location>
        <topology evidence="2">Peptidoglycan-anchor</topology>
    </subcellularLocation>
    <text evidence="2">Encodes an LPXTG motif-containing sorting signal that targets to the cell wall, which is catalyzed by sortase A.</text>
</comment>
<comment type="induction">
    <text evidence="1">Repressed by fur in the presence of iron.</text>
</comment>
<comment type="domain">
    <text evidence="1">The NEAT domain is responsible for binding Fe(3+) and Fe(2+) heme and fibrinogen. The NEAT domain is an inhibitor of apolactoferrin activity, while the C-domain confers resistance to bovine lactoferricin (By similarity).</text>
</comment>
<comment type="similarity">
    <text evidence="8">Belongs to the IsdA family.</text>
</comment>
<organism>
    <name type="scientific">Staphylococcus aureus (strain JH9)</name>
    <dbReference type="NCBI Taxonomy" id="359786"/>
    <lineage>
        <taxon>Bacteria</taxon>
        <taxon>Bacillati</taxon>
        <taxon>Bacillota</taxon>
        <taxon>Bacilli</taxon>
        <taxon>Bacillales</taxon>
        <taxon>Staphylococcaceae</taxon>
        <taxon>Staphylococcus</taxon>
    </lineage>
</organism>
<protein>
    <recommendedName>
        <fullName>Iron-regulated surface determinant protein A</fullName>
    </recommendedName>
    <alternativeName>
        <fullName>Fur-regulated protein A</fullName>
    </alternativeName>
    <alternativeName>
        <fullName>Staphylococcal transferrin-binding protein A</fullName>
    </alternativeName>
</protein>
<gene>
    <name type="primary">isdA</name>
    <name type="synonym">frpA</name>
    <name type="synonym">stbA</name>
    <name type="ordered locus">SaurJH9_1189</name>
</gene>
<proteinExistence type="inferred from homology"/>